<organism>
    <name type="scientific">Bacillus cereus (strain Q1)</name>
    <dbReference type="NCBI Taxonomy" id="361100"/>
    <lineage>
        <taxon>Bacteria</taxon>
        <taxon>Bacillati</taxon>
        <taxon>Bacillota</taxon>
        <taxon>Bacilli</taxon>
        <taxon>Bacillales</taxon>
        <taxon>Bacillaceae</taxon>
        <taxon>Bacillus</taxon>
        <taxon>Bacillus cereus group</taxon>
    </lineage>
</organism>
<feature type="chain" id="PRO_1000184938" description="Coproheme decarboxylase">
    <location>
        <begin position="1"/>
        <end position="247"/>
    </location>
</feature>
<feature type="active site" evidence="1">
    <location>
        <position position="143"/>
    </location>
</feature>
<feature type="binding site" evidence="1">
    <location>
        <position position="129"/>
    </location>
    <ligand>
        <name>Fe-coproporphyrin III</name>
        <dbReference type="ChEBI" id="CHEBI:68438"/>
    </ligand>
</feature>
<feature type="binding site" evidence="1">
    <location>
        <begin position="143"/>
        <end position="147"/>
    </location>
    <ligand>
        <name>Fe-coproporphyrin III</name>
        <dbReference type="ChEBI" id="CHEBI:68438"/>
    </ligand>
</feature>
<feature type="binding site" description="axial binding residue" evidence="1">
    <location>
        <position position="170"/>
    </location>
    <ligand>
        <name>Fe-coproporphyrin III</name>
        <dbReference type="ChEBI" id="CHEBI:68438"/>
    </ligand>
    <ligandPart>
        <name>Fe</name>
        <dbReference type="ChEBI" id="CHEBI:18248"/>
    </ligandPart>
</feature>
<feature type="binding site" evidence="1">
    <location>
        <position position="183"/>
    </location>
    <ligand>
        <name>Fe-coproporphyrin III</name>
        <dbReference type="ChEBI" id="CHEBI:68438"/>
    </ligand>
</feature>
<feature type="binding site" evidence="1">
    <location>
        <position position="221"/>
    </location>
    <ligand>
        <name>Fe-coproporphyrin III</name>
        <dbReference type="ChEBI" id="CHEBI:68438"/>
    </ligand>
</feature>
<gene>
    <name evidence="1" type="primary">chdC</name>
    <name type="ordered locus">BCQ_5229</name>
</gene>
<name>CHDC_BACCQ</name>
<comment type="function">
    <text evidence="1">Involved in coproporphyrin-dependent heme b biosynthesis. Catalyzes the decarboxylation of Fe-coproporphyrin III (coproheme) to heme b (protoheme IX), the last step of the pathway. The reaction occurs in a stepwise manner with a three-propionate intermediate.</text>
</comment>
<comment type="catalytic activity">
    <reaction evidence="1">
        <text>Fe-coproporphyrin III + 2 H2O2 + 2 H(+) = heme b + 2 CO2 + 4 H2O</text>
        <dbReference type="Rhea" id="RHEA:56516"/>
        <dbReference type="ChEBI" id="CHEBI:15377"/>
        <dbReference type="ChEBI" id="CHEBI:15378"/>
        <dbReference type="ChEBI" id="CHEBI:16240"/>
        <dbReference type="ChEBI" id="CHEBI:16526"/>
        <dbReference type="ChEBI" id="CHEBI:60344"/>
        <dbReference type="ChEBI" id="CHEBI:68438"/>
        <dbReference type="EC" id="1.3.98.5"/>
    </reaction>
    <physiologicalReaction direction="left-to-right" evidence="1">
        <dbReference type="Rhea" id="RHEA:56517"/>
    </physiologicalReaction>
</comment>
<comment type="catalytic activity">
    <reaction evidence="1">
        <text>Fe-coproporphyrin III + H2O2 + H(+) = harderoheme III + CO2 + 2 H2O</text>
        <dbReference type="Rhea" id="RHEA:57940"/>
        <dbReference type="ChEBI" id="CHEBI:15377"/>
        <dbReference type="ChEBI" id="CHEBI:15378"/>
        <dbReference type="ChEBI" id="CHEBI:16240"/>
        <dbReference type="ChEBI" id="CHEBI:16526"/>
        <dbReference type="ChEBI" id="CHEBI:68438"/>
        <dbReference type="ChEBI" id="CHEBI:142463"/>
    </reaction>
    <physiologicalReaction direction="left-to-right" evidence="1">
        <dbReference type="Rhea" id="RHEA:57941"/>
    </physiologicalReaction>
</comment>
<comment type="catalytic activity">
    <reaction evidence="1">
        <text>harderoheme III + H2O2 + H(+) = heme b + CO2 + 2 H2O</text>
        <dbReference type="Rhea" id="RHEA:57944"/>
        <dbReference type="ChEBI" id="CHEBI:15377"/>
        <dbReference type="ChEBI" id="CHEBI:15378"/>
        <dbReference type="ChEBI" id="CHEBI:16240"/>
        <dbReference type="ChEBI" id="CHEBI:16526"/>
        <dbReference type="ChEBI" id="CHEBI:60344"/>
        <dbReference type="ChEBI" id="CHEBI:142463"/>
    </reaction>
    <physiologicalReaction direction="left-to-right" evidence="1">
        <dbReference type="Rhea" id="RHEA:57945"/>
    </physiologicalReaction>
</comment>
<comment type="cofactor">
    <cofactor evidence="1">
        <name>Fe-coproporphyrin III</name>
        <dbReference type="ChEBI" id="CHEBI:68438"/>
    </cofactor>
    <text evidence="1">Fe-coproporphyrin III acts both as a substrate and a redox cofactor.</text>
</comment>
<comment type="pathway">
    <text evidence="1">Porphyrin-containing compound metabolism; protoheme biosynthesis.</text>
</comment>
<comment type="similarity">
    <text evidence="1">Belongs to the ChdC family. Type 1 subfamily.</text>
</comment>
<keyword id="KW-0349">Heme</keyword>
<keyword id="KW-0350">Heme biosynthesis</keyword>
<keyword id="KW-0408">Iron</keyword>
<keyword id="KW-0479">Metal-binding</keyword>
<keyword id="KW-0560">Oxidoreductase</keyword>
<accession>B9IS21</accession>
<sequence>MSEATTTLDGWYCLHDLRSIDWAAWKTLSSDERGQAVSEFLNVVEKWNDVAAAKKGSHAMYTVVGQKADIMLMILRPTMEELNEIETELNKTTLAEYMVPAYSYVSVVELSNYLPADEDPYQNPQILARLYPELPKANHICFYPMDKRRQGDDNWYMLPMEERKKMMYSHSKIGRQYAGKVRQVISGSVGFDDFEWGVTLFADDVLQFKKLIYEMRFDEVSARYGEFGTFFVGNILPDEKVEKFLHI</sequence>
<reference key="1">
    <citation type="journal article" date="2009" name="J. Bacteriol.">
        <title>Complete genome sequence of the extremophilic Bacillus cereus strain Q1 with industrial applications.</title>
        <authorList>
            <person name="Xiong Z."/>
            <person name="Jiang Y."/>
            <person name="Qi D."/>
            <person name="Lu H."/>
            <person name="Yang F."/>
            <person name="Yang J."/>
            <person name="Chen L."/>
            <person name="Sun L."/>
            <person name="Xu X."/>
            <person name="Xue Y."/>
            <person name="Zhu Y."/>
            <person name="Jin Q."/>
        </authorList>
    </citation>
    <scope>NUCLEOTIDE SEQUENCE [LARGE SCALE GENOMIC DNA]</scope>
    <source>
        <strain>Q1</strain>
    </source>
</reference>
<dbReference type="EC" id="1.3.98.5" evidence="1"/>
<dbReference type="EMBL" id="CP000227">
    <property type="protein sequence ID" value="ACM15629.1"/>
    <property type="molecule type" value="Genomic_DNA"/>
</dbReference>
<dbReference type="SMR" id="B9IS21"/>
<dbReference type="KEGG" id="bcq:BCQ_5229"/>
<dbReference type="HOGENOM" id="CLU_063226_1_0_9"/>
<dbReference type="UniPathway" id="UPA00252"/>
<dbReference type="Proteomes" id="UP000000441">
    <property type="component" value="Chromosome"/>
</dbReference>
<dbReference type="GO" id="GO:0020037">
    <property type="term" value="F:heme binding"/>
    <property type="evidence" value="ECO:0007669"/>
    <property type="project" value="InterPro"/>
</dbReference>
<dbReference type="GO" id="GO:0046872">
    <property type="term" value="F:metal ion binding"/>
    <property type="evidence" value="ECO:0007669"/>
    <property type="project" value="UniProtKB-KW"/>
</dbReference>
<dbReference type="GO" id="GO:0016634">
    <property type="term" value="F:oxidoreductase activity, acting on the CH-CH group of donors, oxygen as acceptor"/>
    <property type="evidence" value="ECO:0007669"/>
    <property type="project" value="UniProtKB-UniRule"/>
</dbReference>
<dbReference type="GO" id="GO:0004601">
    <property type="term" value="F:peroxidase activity"/>
    <property type="evidence" value="ECO:0007669"/>
    <property type="project" value="InterPro"/>
</dbReference>
<dbReference type="GO" id="GO:0006785">
    <property type="term" value="P:heme B biosynthetic process"/>
    <property type="evidence" value="ECO:0007669"/>
    <property type="project" value="UniProtKB-UniRule"/>
</dbReference>
<dbReference type="Gene3D" id="3.30.70.1030">
    <property type="entry name" value="Apc35880, domain 1"/>
    <property type="match status" value="2"/>
</dbReference>
<dbReference type="HAMAP" id="MF_01442">
    <property type="entry name" value="Coproheme_decarbox_1"/>
    <property type="match status" value="1"/>
</dbReference>
<dbReference type="InterPro" id="IPR031332">
    <property type="entry name" value="CHDC"/>
</dbReference>
<dbReference type="InterPro" id="IPR010644">
    <property type="entry name" value="ChdC/CLD"/>
</dbReference>
<dbReference type="InterPro" id="IPR011008">
    <property type="entry name" value="Dimeric_a/b-barrel"/>
</dbReference>
<dbReference type="NCBIfam" id="NF008913">
    <property type="entry name" value="PRK12276.1"/>
    <property type="match status" value="1"/>
</dbReference>
<dbReference type="PANTHER" id="PTHR36843:SF1">
    <property type="entry name" value="COPROHEME DECARBOXYLASE"/>
    <property type="match status" value="1"/>
</dbReference>
<dbReference type="PANTHER" id="PTHR36843">
    <property type="entry name" value="HEME-DEPENDENT PEROXIDASE YWFI-RELATED"/>
    <property type="match status" value="1"/>
</dbReference>
<dbReference type="Pfam" id="PF06778">
    <property type="entry name" value="Chlor_dismutase"/>
    <property type="match status" value="1"/>
</dbReference>
<dbReference type="SUPFAM" id="SSF54909">
    <property type="entry name" value="Dimeric alpha+beta barrel"/>
    <property type="match status" value="1"/>
</dbReference>
<protein>
    <recommendedName>
        <fullName evidence="1">Coproheme decarboxylase</fullName>
        <ecNumber evidence="1">1.3.98.5</ecNumber>
    </recommendedName>
    <alternativeName>
        <fullName evidence="1">Coproheme III oxidative decarboxylase</fullName>
    </alternativeName>
    <alternativeName>
        <fullName evidence="1">Hydrogen peroxide-dependent heme synthase</fullName>
    </alternativeName>
</protein>
<evidence type="ECO:0000255" key="1">
    <source>
        <dbReference type="HAMAP-Rule" id="MF_01442"/>
    </source>
</evidence>
<proteinExistence type="inferred from homology"/>